<proteinExistence type="evidence at protein level"/>
<feature type="signal peptide" evidence="2">
    <location>
        <begin position="1"/>
        <end position="19"/>
    </location>
</feature>
<feature type="chain" id="PRO_0000022999" description="Phospholipase A2 inhibitor CNF" evidence="14">
    <location>
        <begin position="20"/>
        <end position="200"/>
    </location>
</feature>
<feature type="glycosylation site" description="N-linked (GlcNAc...) asparagine; partial" evidence="15">
    <location>
        <position position="176"/>
    </location>
</feature>
<feature type="disulfide bond" evidence="1">
    <location>
        <begin position="22"/>
        <end position="46"/>
    </location>
</feature>
<feature type="disulfide bond" evidence="1">
    <location>
        <begin position="25"/>
        <end position="32"/>
    </location>
</feature>
<feature type="disulfide bond" evidence="1">
    <location>
        <begin position="39"/>
        <end position="67"/>
    </location>
</feature>
<feature type="disulfide bond" evidence="1">
    <location>
        <begin position="73"/>
        <end position="94"/>
    </location>
</feature>
<feature type="disulfide bond" evidence="1">
    <location>
        <begin position="95"/>
        <end position="100"/>
    </location>
</feature>
<feature type="disulfide bond" evidence="1">
    <location>
        <begin position="118"/>
        <end position="143"/>
    </location>
</feature>
<feature type="disulfide bond" evidence="1">
    <location>
        <begin position="136"/>
        <end position="165"/>
    </location>
</feature>
<feature type="disulfide bond" evidence="1">
    <location>
        <begin position="169"/>
        <end position="191"/>
    </location>
</feature>
<name>PLIGA_CRODU</name>
<keyword id="KW-0903">Direct protein sequencing</keyword>
<keyword id="KW-1015">Disulfide bond</keyword>
<keyword id="KW-0325">Glycoprotein</keyword>
<keyword id="KW-0593">Phospholipase A2 inhibitor</keyword>
<keyword id="KW-0964">Secreted</keyword>
<keyword id="KW-0732">Signal</keyword>
<comment type="function">
    <text evidence="3 4 6 7 8 9">Inhibits the PLA2 activity of crotoxin (CTX) by replacing the acid subunit (CA) in the CTX complex (PubMed:10903514, PubMed:1949070, PubMed:7851385, PubMed:8195214). Displays a pro-inflammatory action through activation of important main signaling pathways for human leukocytes, in vitro (PubMed:32183984). Abolishes both the muscle-paralyzing and muscle-damaging activities of CTX in mice phrenic nerve-diaphragm muscle preparations (PubMed:33387548).</text>
</comment>
<comment type="subunit">
    <text evidence="3 5">Occurs as a mixture of oligomers (PubMed:24820993). Tetrameric arrangement appears to be the predominant quaternary structure (PubMed:24820993). Interacts with phospholipase A2 crotoxin basic subunit CBd; the interaction leads to dissociation of the CA-CB heterodimer and to inhibition of PLA2 activity of the CB subunit (PubMed:10903514).</text>
</comment>
<comment type="subcellular location">
    <subcellularLocation>
        <location evidence="3 4">Secreted</location>
    </subcellularLocation>
    <text evidence="4">Secreted in blood plasma.</text>
</comment>
<comment type="tissue specificity">
    <text evidence="16">Expressed by the liver.</text>
</comment>
<comment type="PTM">
    <text evidence="5">The carbohydrate moiety increases the inhibition capacity of CNF, but is not essential for activity and for oligomerization.</text>
</comment>
<comment type="mass spectrometry" mass="22201.0" method="MALDI" evidence="5"/>
<comment type="similarity">
    <text evidence="13">Belongs to the CNF-like-inhibitor family.</text>
</comment>
<organism>
    <name type="scientific">Crotalus durissus terrificus</name>
    <name type="common">South American rattlesnake</name>
    <dbReference type="NCBI Taxonomy" id="8732"/>
    <lineage>
        <taxon>Eukaryota</taxon>
        <taxon>Metazoa</taxon>
        <taxon>Chordata</taxon>
        <taxon>Craniata</taxon>
        <taxon>Vertebrata</taxon>
        <taxon>Euteleostomi</taxon>
        <taxon>Lepidosauria</taxon>
        <taxon>Squamata</taxon>
        <taxon>Bifurcata</taxon>
        <taxon>Unidentata</taxon>
        <taxon>Episquamata</taxon>
        <taxon>Toxicofera</taxon>
        <taxon>Serpentes</taxon>
        <taxon>Colubroidea</taxon>
        <taxon>Viperidae</taxon>
        <taxon>Crotalinae</taxon>
        <taxon>Crotalus</taxon>
    </lineage>
</organism>
<reference key="1">
    <citation type="journal article" date="1994" name="J. Biol. Chem.">
        <title>A phospholipase A2 inhibitor from the plasma of the South American rattlesnake (Crotalus durissus terrificus): protein structure, genomic structure and mechanism of action.</title>
        <authorList>
            <person name="Fortes-Dias C.L."/>
            <person name="Lin Y."/>
            <person name="Ewell J."/>
            <person name="Diniz C.R."/>
            <person name="Liu T.-Y."/>
        </authorList>
    </citation>
    <scope>NUCLEOTIDE SEQUENCE [MRNA]</scope>
    <scope>FUNCTION</scope>
    <scope>SUBUNIT</scope>
    <source>
        <tissue>Liver</tissue>
    </source>
</reference>
<reference key="2">
    <citation type="journal article" date="1991" name="Toxicon">
        <title>Purification and properties of an antivenom factor from the plasma of the South American rattlesnake (Crotalus durissus terrificus).</title>
        <authorList>
            <person name="Fortes-Dias C.L."/>
            <person name="Fonseca B.C."/>
            <person name="Kochva E."/>
            <person name="Diniz C.R."/>
        </authorList>
    </citation>
    <scope>PARTIAL PROTEIN SEQUENCE</scope>
    <scope>FUNCTION</scope>
    <scope>SUBCELLULAR LOCATION</scope>
    <source>
        <tissue>Plasma</tissue>
    </source>
</reference>
<reference key="3">
    <citation type="journal article" date="1995" name="Eur. J. Biochem.">
        <title>Molecular structure and mechanism of action of the crotoxin inhibitor from Crotalus durissus terrificus serum.</title>
        <authorList>
            <person name="Perales J."/>
            <person name="Villela C."/>
            <person name="Domont G.B."/>
            <person name="Choumet V."/>
            <person name="Saliou B."/>
            <person name="Moussatche H."/>
            <person name="Bon C."/>
            <person name="Faure G."/>
        </authorList>
    </citation>
    <scope>PROTEIN SEQUENCE OF 20-49</scope>
    <scope>FUNCTION</scope>
    <scope>PROBABLE PARTIAL GLYCOSYLATION</scope>
    <source>
        <tissue>Serum</tissue>
    </source>
</reference>
<reference key="4">
    <citation type="journal article" date="2014" name="Biochim. Biophys. Acta">
        <title>Insights on the structure of native CNF, an endogenous phospholipase A2 inhibitor from Crotalus durissus terrificus, the South American rattlesnake.</title>
        <authorList>
            <person name="Fortes-Dias C.L."/>
            <person name="Ortolani P.L."/>
            <person name="Fernandes C.A."/>
            <person name="Lobo K.R."/>
            <person name="Amaral de Melo L."/>
            <person name="Borges M.H."/>
            <person name="Pazin W.M."/>
            <person name="de Oliveira Neto O."/>
            <person name="Fernandez R.M."/>
            <person name="Fontes M.R."/>
        </authorList>
    </citation>
    <scope>PROTEIN SEQUENCE OF 20-39</scope>
    <scope>SUBUNIT</scope>
    <scope>MASS SPECTROMETRY</scope>
    <scope>3D-STRUCTURE MODELING</scope>
    <scope>GLYCOSYLATION</scope>
    <source>
        <tissue>Plasma</tissue>
    </source>
</reference>
<reference key="5">
    <citation type="journal article" date="2000" name="Eur. J. Biochem.">
        <title>Interaction of the neurotoxic and nontoxic secretory phospholipases A2 with the crotoxin inhibitor from Crotalus serum.</title>
        <authorList>
            <person name="Faure G."/>
            <person name="Villela C."/>
            <person name="Perales J."/>
            <person name="Bon C."/>
        </authorList>
    </citation>
    <scope>FUNCTION</scope>
    <scope>SUBCELLULAR LOCATION</scope>
    <scope>INTERACTION WITH CBD</scope>
</reference>
<reference key="6">
    <citation type="journal article" date="2020" name="Immunobiology">
        <title>Crotalus neutralising factor and its role in human leukocyte modulation.</title>
        <authorList>
            <person name="Macedo Tavares M.N."/>
            <person name="Reis V.P."/>
            <person name="Alves Rego C.M."/>
            <person name="Paloschi M.V."/>
            <person name="Santana H.M."/>
            <person name="Ferreira E Ferreira A.A."/>
            <person name="Souza Silva M.D."/>
            <person name="Setubal S.S."/>
            <person name="Fortes-Dias C.L."/>
            <person name="Zuliani J.P."/>
        </authorList>
    </citation>
    <scope>FUNCTION</scope>
    <source>
        <tissue>Plasma</tissue>
    </source>
</reference>
<reference key="7">
    <citation type="journal article" date="2021" name="Toxicon">
        <title>Crotalus neutralizing factor (CNF) inhibits the toxic effects of Crotoxin at mouse neuromuscular preparations.</title>
        <authorList>
            <person name="Pinto E.K.R."/>
            <person name="Souza N.M.V."/>
            <person name="Maciel F.V."/>
            <person name="de Abreu T.A.G."/>
            <person name="Reis H.F.F."/>
            <person name="Ortolani P.L."/>
            <person name="Fortes-Dias C.L."/>
            <person name="Cavalcante W.L.G."/>
        </authorList>
    </citation>
    <scope>FUNCTION</scope>
    <source>
        <tissue>Plasma</tissue>
    </source>
</reference>
<evidence type="ECO:0000250" key="1">
    <source>
        <dbReference type="UniProtKB" id="Q7LZI1"/>
    </source>
</evidence>
<evidence type="ECO:0000255" key="2"/>
<evidence type="ECO:0000269" key="3">
    <source>
    </source>
</evidence>
<evidence type="ECO:0000269" key="4">
    <source>
    </source>
</evidence>
<evidence type="ECO:0000269" key="5">
    <source>
    </source>
</evidence>
<evidence type="ECO:0000269" key="6">
    <source>
    </source>
</evidence>
<evidence type="ECO:0000269" key="7">
    <source>
    </source>
</evidence>
<evidence type="ECO:0000269" key="8">
    <source>
    </source>
</evidence>
<evidence type="ECO:0000269" key="9">
    <source>
    </source>
</evidence>
<evidence type="ECO:0000303" key="10">
    <source>
    </source>
</evidence>
<evidence type="ECO:0000303" key="11">
    <source>
    </source>
</evidence>
<evidence type="ECO:0000303" key="12">
    <source>
    </source>
</evidence>
<evidence type="ECO:0000305" key="13"/>
<evidence type="ECO:0000305" key="14">
    <source>
    </source>
</evidence>
<evidence type="ECO:0000305" key="15">
    <source>
    </source>
</evidence>
<evidence type="ECO:0000305" key="16">
    <source>
    </source>
</evidence>
<sequence length="200" mass="22267">MKYLHTICLLFIFVARGNSRSCDFCHNIGKDCDGYEEECSSPEDVCGKVLLEISSASLSVRTVHKNCFSSSICKLGQFDVNIGHHSYIRGRINCCEKELCEDQPFPGLPLSKPNGYYCPGAIGLFTKDSTEYEAICKGTETKCINIVGHRYEQFPGDISYNLKGCVSSCPLLSLSNATFEQNRNYLEKVECKDAIRLASL</sequence>
<protein>
    <recommendedName>
        <fullName evidence="13">Phospholipase A2 inhibitor CNF</fullName>
    </recommendedName>
    <alternativeName>
        <fullName evidence="11">Crotalus neutralizing factor</fullName>
        <shortName evidence="11">CNF</shortName>
    </alternativeName>
    <alternativeName>
        <fullName evidence="12">Crotoxin inhibitor from Crotulus serum</fullName>
        <shortName evidence="12">CICS</shortName>
    </alternativeName>
    <alternativeName>
        <fullName evidence="10">Snake blood gamma-PLI</fullName>
        <shortName evidence="10">Sb-gamma-PLI</shortName>
        <shortName evidence="11">gamma-PLI</shortName>
    </alternativeName>
</protein>
<dbReference type="EMBL" id="U08289">
    <property type="protein sequence ID" value="AAA19162.1"/>
    <property type="molecule type" value="mRNA"/>
</dbReference>
<dbReference type="PIR" id="A54020">
    <property type="entry name" value="A54020"/>
</dbReference>
<dbReference type="iPTMnet" id="Q90358"/>
<dbReference type="GO" id="GO:0005576">
    <property type="term" value="C:extracellular region"/>
    <property type="evidence" value="ECO:0007669"/>
    <property type="project" value="UniProtKB-SubCell"/>
</dbReference>
<dbReference type="GO" id="GO:0019834">
    <property type="term" value="F:phospholipase A2 inhibitor activity"/>
    <property type="evidence" value="ECO:0007669"/>
    <property type="project" value="UniProtKB-KW"/>
</dbReference>
<dbReference type="CDD" id="cd23629">
    <property type="entry name" value="TFP_LU_ECD_PLIGA"/>
    <property type="match status" value="1"/>
</dbReference>
<dbReference type="Gene3D" id="2.10.60.10">
    <property type="entry name" value="CD59"/>
    <property type="match status" value="1"/>
</dbReference>
<dbReference type="InterPro" id="IPR050918">
    <property type="entry name" value="CNF-like_PLA2_Inhibitor"/>
</dbReference>
<dbReference type="InterPro" id="IPR016054">
    <property type="entry name" value="LY6_UPA_recep-like"/>
</dbReference>
<dbReference type="InterPro" id="IPR016338">
    <property type="entry name" value="PLipase_A2-inh_b-type"/>
</dbReference>
<dbReference type="InterPro" id="IPR004126">
    <property type="entry name" value="PLipase_A2_inh_N"/>
</dbReference>
<dbReference type="InterPro" id="IPR045860">
    <property type="entry name" value="Snake_toxin-like_sf"/>
</dbReference>
<dbReference type="PANTHER" id="PTHR20914">
    <property type="entry name" value="LY6/PLAUR DOMAIN-CONTAINING PROTEIN 8"/>
    <property type="match status" value="1"/>
</dbReference>
<dbReference type="PANTHER" id="PTHR20914:SF30">
    <property type="entry name" value="LY6_PLAUR DOMAIN CONTAINING 9"/>
    <property type="match status" value="1"/>
</dbReference>
<dbReference type="Pfam" id="PF02988">
    <property type="entry name" value="PLA2_inh"/>
    <property type="match status" value="1"/>
</dbReference>
<dbReference type="Pfam" id="PF00021">
    <property type="entry name" value="UPAR_LY6"/>
    <property type="match status" value="1"/>
</dbReference>
<dbReference type="PIRSF" id="PIRSF002023">
    <property type="entry name" value="PLA2_inhib_alpha/gamma"/>
    <property type="match status" value="1"/>
</dbReference>
<dbReference type="SMART" id="SM00134">
    <property type="entry name" value="LU"/>
    <property type="match status" value="1"/>
</dbReference>
<dbReference type="SUPFAM" id="SSF57302">
    <property type="entry name" value="Snake toxin-like"/>
    <property type="match status" value="2"/>
</dbReference>
<accession>Q90358</accession>